<accession>A9VNA7</accession>
<sequence>MRKKVVLSCEECKNRNYSTMKDTSSVERLEIKKFCKTCNKHTVHKETK</sequence>
<protein>
    <recommendedName>
        <fullName evidence="1">Large ribosomal subunit protein bL33A</fullName>
    </recommendedName>
    <alternativeName>
        <fullName evidence="1">50S ribosomal protein L33 1</fullName>
    </alternativeName>
</protein>
<reference key="1">
    <citation type="journal article" date="2008" name="Chem. Biol. Interact.">
        <title>Extending the Bacillus cereus group genomics to putative food-borne pathogens of different toxicity.</title>
        <authorList>
            <person name="Lapidus A."/>
            <person name="Goltsman E."/>
            <person name="Auger S."/>
            <person name="Galleron N."/>
            <person name="Segurens B."/>
            <person name="Dossat C."/>
            <person name="Land M.L."/>
            <person name="Broussolle V."/>
            <person name="Brillard J."/>
            <person name="Guinebretiere M.-H."/>
            <person name="Sanchis V."/>
            <person name="Nguen-the C."/>
            <person name="Lereclus D."/>
            <person name="Richardson P."/>
            <person name="Wincker P."/>
            <person name="Weissenbach J."/>
            <person name="Ehrlich S.D."/>
            <person name="Sorokin A."/>
        </authorList>
    </citation>
    <scope>NUCLEOTIDE SEQUENCE [LARGE SCALE GENOMIC DNA]</scope>
    <source>
        <strain>KBAB4</strain>
    </source>
</reference>
<dbReference type="EMBL" id="CP000903">
    <property type="protein sequence ID" value="ABY41358.1"/>
    <property type="molecule type" value="Genomic_DNA"/>
</dbReference>
<dbReference type="SMR" id="A9VNA7"/>
<dbReference type="KEGG" id="bwe:BcerKBAB4_0089"/>
<dbReference type="eggNOG" id="COG0267">
    <property type="taxonomic scope" value="Bacteria"/>
</dbReference>
<dbReference type="HOGENOM" id="CLU_190949_0_1_9"/>
<dbReference type="Proteomes" id="UP000002154">
    <property type="component" value="Chromosome"/>
</dbReference>
<dbReference type="GO" id="GO:0005737">
    <property type="term" value="C:cytoplasm"/>
    <property type="evidence" value="ECO:0007669"/>
    <property type="project" value="UniProtKB-ARBA"/>
</dbReference>
<dbReference type="GO" id="GO:1990904">
    <property type="term" value="C:ribonucleoprotein complex"/>
    <property type="evidence" value="ECO:0007669"/>
    <property type="project" value="UniProtKB-KW"/>
</dbReference>
<dbReference type="GO" id="GO:0005840">
    <property type="term" value="C:ribosome"/>
    <property type="evidence" value="ECO:0007669"/>
    <property type="project" value="UniProtKB-KW"/>
</dbReference>
<dbReference type="GO" id="GO:0003735">
    <property type="term" value="F:structural constituent of ribosome"/>
    <property type="evidence" value="ECO:0007669"/>
    <property type="project" value="InterPro"/>
</dbReference>
<dbReference type="GO" id="GO:0006412">
    <property type="term" value="P:translation"/>
    <property type="evidence" value="ECO:0007669"/>
    <property type="project" value="UniProtKB-UniRule"/>
</dbReference>
<dbReference type="Gene3D" id="2.20.28.120">
    <property type="entry name" value="Ribosomal protein L33"/>
    <property type="match status" value="1"/>
</dbReference>
<dbReference type="HAMAP" id="MF_00294">
    <property type="entry name" value="Ribosomal_bL33"/>
    <property type="match status" value="1"/>
</dbReference>
<dbReference type="InterPro" id="IPR001705">
    <property type="entry name" value="Ribosomal_bL33"/>
</dbReference>
<dbReference type="InterPro" id="IPR038584">
    <property type="entry name" value="Ribosomal_bL33_sf"/>
</dbReference>
<dbReference type="InterPro" id="IPR011332">
    <property type="entry name" value="Ribosomal_zn-bd"/>
</dbReference>
<dbReference type="NCBIfam" id="NF001764">
    <property type="entry name" value="PRK00504.1"/>
    <property type="match status" value="1"/>
</dbReference>
<dbReference type="NCBIfam" id="NF001860">
    <property type="entry name" value="PRK00595.1"/>
    <property type="match status" value="1"/>
</dbReference>
<dbReference type="NCBIfam" id="TIGR01023">
    <property type="entry name" value="rpmG_bact"/>
    <property type="match status" value="1"/>
</dbReference>
<dbReference type="Pfam" id="PF00471">
    <property type="entry name" value="Ribosomal_L33"/>
    <property type="match status" value="1"/>
</dbReference>
<dbReference type="SUPFAM" id="SSF57829">
    <property type="entry name" value="Zn-binding ribosomal proteins"/>
    <property type="match status" value="1"/>
</dbReference>
<gene>
    <name evidence="1" type="primary">rpmG1</name>
    <name type="ordered locus">BcerKBAB4_0089</name>
</gene>
<name>RL331_BACMK</name>
<comment type="similarity">
    <text evidence="1">Belongs to the bacterial ribosomal protein bL33 family.</text>
</comment>
<keyword id="KW-0687">Ribonucleoprotein</keyword>
<keyword id="KW-0689">Ribosomal protein</keyword>
<evidence type="ECO:0000255" key="1">
    <source>
        <dbReference type="HAMAP-Rule" id="MF_00294"/>
    </source>
</evidence>
<proteinExistence type="inferred from homology"/>
<feature type="chain" id="PRO_0000356398" description="Large ribosomal subunit protein bL33A">
    <location>
        <begin position="1"/>
        <end position="48"/>
    </location>
</feature>
<organism>
    <name type="scientific">Bacillus mycoides (strain KBAB4)</name>
    <name type="common">Bacillus weihenstephanensis</name>
    <dbReference type="NCBI Taxonomy" id="315730"/>
    <lineage>
        <taxon>Bacteria</taxon>
        <taxon>Bacillati</taxon>
        <taxon>Bacillota</taxon>
        <taxon>Bacilli</taxon>
        <taxon>Bacillales</taxon>
        <taxon>Bacillaceae</taxon>
        <taxon>Bacillus</taxon>
        <taxon>Bacillus cereus group</taxon>
    </lineage>
</organism>